<proteinExistence type="evidence at transcript level"/>
<name>PP3BB_XENLA</name>
<reference key="1">
    <citation type="submission" date="2004-06" db="EMBL/GenBank/DDBJ databases">
        <authorList>
            <consortium name="NIH - Xenopus Gene Collection (XGC) project"/>
        </authorList>
    </citation>
    <scope>NUCLEOTIDE SEQUENCE [LARGE SCALE MRNA]</scope>
    <source>
        <tissue>Ovary</tissue>
    </source>
</reference>
<evidence type="ECO:0000250" key="1"/>
<evidence type="ECO:0000255" key="2">
    <source>
        <dbReference type="PROSITE-ProRule" id="PRU00491"/>
    </source>
</evidence>
<gene>
    <name type="primary">ppp1r3b-b</name>
</gene>
<organism>
    <name type="scientific">Xenopus laevis</name>
    <name type="common">African clawed frog</name>
    <dbReference type="NCBI Taxonomy" id="8355"/>
    <lineage>
        <taxon>Eukaryota</taxon>
        <taxon>Metazoa</taxon>
        <taxon>Chordata</taxon>
        <taxon>Craniata</taxon>
        <taxon>Vertebrata</taxon>
        <taxon>Euteleostomi</taxon>
        <taxon>Amphibia</taxon>
        <taxon>Batrachia</taxon>
        <taxon>Anura</taxon>
        <taxon>Pipoidea</taxon>
        <taxon>Pipidae</taxon>
        <taxon>Xenopodinae</taxon>
        <taxon>Xenopus</taxon>
        <taxon>Xenopus</taxon>
    </lineage>
</organism>
<accession>Q6GQ68</accession>
<dbReference type="EMBL" id="BC072880">
    <property type="protein sequence ID" value="AAH72880.1"/>
    <property type="molecule type" value="mRNA"/>
</dbReference>
<dbReference type="RefSeq" id="NP_001085518.1">
    <property type="nucleotide sequence ID" value="NM_001092049.1"/>
</dbReference>
<dbReference type="SMR" id="Q6GQ68"/>
<dbReference type="BioGRID" id="102107">
    <property type="interactions" value="1"/>
</dbReference>
<dbReference type="CAZy" id="CBM21">
    <property type="family name" value="Carbohydrate-Binding Module Family 21"/>
</dbReference>
<dbReference type="DNASU" id="443944"/>
<dbReference type="GeneID" id="443944"/>
<dbReference type="KEGG" id="xla:443944"/>
<dbReference type="AGR" id="Xenbase:XB-GENE-6251522"/>
<dbReference type="CTD" id="443944"/>
<dbReference type="Xenbase" id="XB-GENE-6251522">
    <property type="gene designation" value="ppp1r3b.S"/>
</dbReference>
<dbReference type="OrthoDB" id="8942186at2759"/>
<dbReference type="Proteomes" id="UP000186698">
    <property type="component" value="Chromosome 1S"/>
</dbReference>
<dbReference type="Bgee" id="443944">
    <property type="expression patterns" value="Expressed in egg cell and 19 other cell types or tissues"/>
</dbReference>
<dbReference type="GO" id="GO:0000164">
    <property type="term" value="C:protein phosphatase type 1 complex"/>
    <property type="evidence" value="ECO:0000318"/>
    <property type="project" value="GO_Central"/>
</dbReference>
<dbReference type="GO" id="GO:2001069">
    <property type="term" value="F:glycogen binding"/>
    <property type="evidence" value="ECO:0000318"/>
    <property type="project" value="GO_Central"/>
</dbReference>
<dbReference type="GO" id="GO:0008157">
    <property type="term" value="F:protein phosphatase 1 binding"/>
    <property type="evidence" value="ECO:0000318"/>
    <property type="project" value="GO_Central"/>
</dbReference>
<dbReference type="GO" id="GO:0005977">
    <property type="term" value="P:glycogen metabolic process"/>
    <property type="evidence" value="ECO:0007669"/>
    <property type="project" value="UniProtKB-KW"/>
</dbReference>
<dbReference type="GO" id="GO:0005979">
    <property type="term" value="P:regulation of glycogen biosynthetic process"/>
    <property type="evidence" value="ECO:0000318"/>
    <property type="project" value="GO_Central"/>
</dbReference>
<dbReference type="CDD" id="cd22814">
    <property type="entry name" value="PBD_PPP1R3B"/>
    <property type="match status" value="1"/>
</dbReference>
<dbReference type="FunFam" id="2.60.40.2440:FF:000001">
    <property type="entry name" value="Protein phosphatase 1 regulatory subunit 3C"/>
    <property type="match status" value="1"/>
</dbReference>
<dbReference type="Gene3D" id="2.60.40.2440">
    <property type="entry name" value="Carbohydrate binding type-21 domain"/>
    <property type="match status" value="1"/>
</dbReference>
<dbReference type="InterPro" id="IPR005036">
    <property type="entry name" value="CBM21_dom"/>
</dbReference>
<dbReference type="InterPro" id="IPR038175">
    <property type="entry name" value="CBM21_dom_sf"/>
</dbReference>
<dbReference type="InterPro" id="IPR017434">
    <property type="entry name" value="Pase-1_reg-su_3B/C/D_met"/>
</dbReference>
<dbReference type="InterPro" id="IPR050782">
    <property type="entry name" value="PP1_regulatory_subunit_3"/>
</dbReference>
<dbReference type="PANTHER" id="PTHR12307">
    <property type="entry name" value="PROTEIN PHOSPHATASE 1 REGULATORY SUBUNIT"/>
    <property type="match status" value="1"/>
</dbReference>
<dbReference type="PANTHER" id="PTHR12307:SF13">
    <property type="entry name" value="PROTEIN PHOSPHATASE 1 REGULATORY SUBUNIT 3B"/>
    <property type="match status" value="1"/>
</dbReference>
<dbReference type="Pfam" id="PF03370">
    <property type="entry name" value="CBM_21"/>
    <property type="match status" value="1"/>
</dbReference>
<dbReference type="PIRSF" id="PIRSF038207">
    <property type="entry name" value="PP1_GT_animal"/>
    <property type="match status" value="1"/>
</dbReference>
<dbReference type="PROSITE" id="PS51159">
    <property type="entry name" value="CBM21"/>
    <property type="match status" value="1"/>
</dbReference>
<sequence length="271" mass="31269">MALDIAMKFYLRSPLRRDRVECRITQSNEPLRPCIQTTDKTLLSELSNQENKVKKRVSFADSRGLALTMVKVYSDFDDELEIPFNISELIDNIVNLTTVEKEHFVLDFVQPSADYLDFRNRLKADSVCLENCMLKDKALVGTVKVKNLAFQKCVKIRITFDSWQTYTDYDCQYVKDSYGGSDKDTFSFDVSLPDSIQSNARLEFAVCFDCEGRIFWDSNKGLNYRIVRHGHRIPYDPVCVSVDQYGSPRCSYGIFPELPTYSGFDKLGPYY</sequence>
<feature type="chain" id="PRO_0000324548" description="Protein phosphatase 1 regulatory subunit 3B-B">
    <location>
        <begin position="1"/>
        <end position="271"/>
    </location>
</feature>
<feature type="domain" description="CBM21" evidence="2">
    <location>
        <begin position="119"/>
        <end position="227"/>
    </location>
</feature>
<feature type="short sequence motif" description="PP1-binding motif">
    <location>
        <begin position="56"/>
        <end position="59"/>
    </location>
</feature>
<protein>
    <recommendedName>
        <fullName>Protein phosphatase 1 regulatory subunit 3B-B</fullName>
    </recommendedName>
</protein>
<keyword id="KW-0119">Carbohydrate metabolism</keyword>
<keyword id="KW-0321">Glycogen metabolism</keyword>
<keyword id="KW-1185">Reference proteome</keyword>
<comment type="function">
    <text evidence="1">Acts as a glycogen-targeting subunit for phosphatase PP1. Facilitates interaction of the PP1 with enzymes of the glycogen metabolism and regulates its activity. Suppresses the rate at which PP1 dephosphorylates (inactivates) glycogen phosphorylase and enhances the rate at which it activates glycogen synthase and therefore limits glycogen breakdown (By similarity).</text>
</comment>
<comment type="subunit">
    <text evidence="1">Interacts with glycogen, PPP1CC catalytic subunit of PP1 and PYGL. Associates with glycogen particles. Forms complexes with debranching enzyme, glycogen phosphorylase, glycogen synthase and phosphorylase kinase which is necessary for its regulation of PP1 activity (By similarity).</text>
</comment>
<comment type="domain">
    <text evidence="1">The N-terminal region is required for binding to PP1, the central region is required for binding to glycogen and the C-terminal region is required for binding to PYGL.</text>
</comment>